<feature type="chain" id="PRO_1000012556" description="Soluble pyridine nucleotide transhydrogenase">
    <location>
        <begin position="1"/>
        <end position="466"/>
    </location>
</feature>
<feature type="binding site" evidence="1">
    <location>
        <begin position="36"/>
        <end position="45"/>
    </location>
    <ligand>
        <name>FAD</name>
        <dbReference type="ChEBI" id="CHEBI:57692"/>
    </ligand>
</feature>
<comment type="function">
    <text evidence="1">Conversion of NADPH, generated by peripheral catabolic pathways, to NADH, which can enter the respiratory chain for energy generation.</text>
</comment>
<comment type="catalytic activity">
    <reaction evidence="1">
        <text>NAD(+) + NADPH = NADH + NADP(+)</text>
        <dbReference type="Rhea" id="RHEA:11692"/>
        <dbReference type="ChEBI" id="CHEBI:57540"/>
        <dbReference type="ChEBI" id="CHEBI:57783"/>
        <dbReference type="ChEBI" id="CHEBI:57945"/>
        <dbReference type="ChEBI" id="CHEBI:58349"/>
        <dbReference type="EC" id="1.6.1.1"/>
    </reaction>
</comment>
<comment type="cofactor">
    <cofactor evidence="1">
        <name>FAD</name>
        <dbReference type="ChEBI" id="CHEBI:57692"/>
    </cofactor>
    <text evidence="1">Binds 1 FAD per subunit.</text>
</comment>
<comment type="subcellular location">
    <subcellularLocation>
        <location evidence="1">Cytoplasm</location>
    </subcellularLocation>
</comment>
<comment type="similarity">
    <text evidence="1">Belongs to the class-I pyridine nucleotide-disulfide oxidoreductase family.</text>
</comment>
<keyword id="KW-0963">Cytoplasm</keyword>
<keyword id="KW-0274">FAD</keyword>
<keyword id="KW-0285">Flavoprotein</keyword>
<keyword id="KW-0520">NAD</keyword>
<keyword id="KW-0521">NADP</keyword>
<keyword id="KW-0560">Oxidoreductase</keyword>
<keyword id="KW-1185">Reference proteome</keyword>
<name>STHA_ECOK1</name>
<proteinExistence type="inferred from homology"/>
<dbReference type="EC" id="1.6.1.1" evidence="1"/>
<dbReference type="EMBL" id="CP000468">
    <property type="protein sequence ID" value="ABJ03432.1"/>
    <property type="molecule type" value="Genomic_DNA"/>
</dbReference>
<dbReference type="RefSeq" id="WP_001120810.1">
    <property type="nucleotide sequence ID" value="NZ_CADILS010000014.1"/>
</dbReference>
<dbReference type="SMR" id="A1AIE2"/>
<dbReference type="GeneID" id="75203206"/>
<dbReference type="KEGG" id="ecv:APECO1_2503"/>
<dbReference type="HOGENOM" id="CLU_016755_0_0_6"/>
<dbReference type="Proteomes" id="UP000008216">
    <property type="component" value="Chromosome"/>
</dbReference>
<dbReference type="GO" id="GO:0005829">
    <property type="term" value="C:cytosol"/>
    <property type="evidence" value="ECO:0007669"/>
    <property type="project" value="TreeGrafter"/>
</dbReference>
<dbReference type="GO" id="GO:0004148">
    <property type="term" value="F:dihydrolipoyl dehydrogenase (NADH) activity"/>
    <property type="evidence" value="ECO:0007669"/>
    <property type="project" value="TreeGrafter"/>
</dbReference>
<dbReference type="GO" id="GO:0050660">
    <property type="term" value="F:flavin adenine dinucleotide binding"/>
    <property type="evidence" value="ECO:0007669"/>
    <property type="project" value="TreeGrafter"/>
</dbReference>
<dbReference type="GO" id="GO:0003957">
    <property type="term" value="F:NAD(P)+ transhydrogenase (Si-specific) activity"/>
    <property type="evidence" value="ECO:0007669"/>
    <property type="project" value="UniProtKB-UniRule"/>
</dbReference>
<dbReference type="GO" id="GO:0006103">
    <property type="term" value="P:2-oxoglutarate metabolic process"/>
    <property type="evidence" value="ECO:0007669"/>
    <property type="project" value="TreeGrafter"/>
</dbReference>
<dbReference type="GO" id="GO:0006739">
    <property type="term" value="P:NADP metabolic process"/>
    <property type="evidence" value="ECO:0007669"/>
    <property type="project" value="UniProtKB-UniRule"/>
</dbReference>
<dbReference type="FunFam" id="3.30.390.30:FF:000002">
    <property type="entry name" value="Soluble pyridine nucleotide transhydrogenase"/>
    <property type="match status" value="1"/>
</dbReference>
<dbReference type="FunFam" id="3.50.50.60:FF:000008">
    <property type="entry name" value="Soluble pyridine nucleotide transhydrogenase"/>
    <property type="match status" value="1"/>
</dbReference>
<dbReference type="Gene3D" id="3.30.390.30">
    <property type="match status" value="1"/>
</dbReference>
<dbReference type="Gene3D" id="3.50.50.60">
    <property type="entry name" value="FAD/NAD(P)-binding domain"/>
    <property type="match status" value="2"/>
</dbReference>
<dbReference type="HAMAP" id="MF_00247">
    <property type="entry name" value="SthA"/>
    <property type="match status" value="1"/>
</dbReference>
<dbReference type="InterPro" id="IPR050151">
    <property type="entry name" value="Class-I_Pyr_Nuc-Dis_Oxidored"/>
</dbReference>
<dbReference type="InterPro" id="IPR036188">
    <property type="entry name" value="FAD/NAD-bd_sf"/>
</dbReference>
<dbReference type="InterPro" id="IPR023753">
    <property type="entry name" value="FAD/NAD-binding_dom"/>
</dbReference>
<dbReference type="InterPro" id="IPR016156">
    <property type="entry name" value="FAD/NAD-linked_Rdtase_dimer_sf"/>
</dbReference>
<dbReference type="InterPro" id="IPR001100">
    <property type="entry name" value="Pyr_nuc-diS_OxRdtase"/>
</dbReference>
<dbReference type="InterPro" id="IPR004099">
    <property type="entry name" value="Pyr_nucl-diS_OxRdtase_dimer"/>
</dbReference>
<dbReference type="InterPro" id="IPR022962">
    <property type="entry name" value="STH_gammaproteobact"/>
</dbReference>
<dbReference type="NCBIfam" id="NF003585">
    <property type="entry name" value="PRK05249.1"/>
    <property type="match status" value="1"/>
</dbReference>
<dbReference type="PANTHER" id="PTHR22912">
    <property type="entry name" value="DISULFIDE OXIDOREDUCTASE"/>
    <property type="match status" value="1"/>
</dbReference>
<dbReference type="PANTHER" id="PTHR22912:SF93">
    <property type="entry name" value="SOLUBLE PYRIDINE NUCLEOTIDE TRANSHYDROGENASE"/>
    <property type="match status" value="1"/>
</dbReference>
<dbReference type="Pfam" id="PF07992">
    <property type="entry name" value="Pyr_redox_2"/>
    <property type="match status" value="1"/>
</dbReference>
<dbReference type="Pfam" id="PF02852">
    <property type="entry name" value="Pyr_redox_dim"/>
    <property type="match status" value="1"/>
</dbReference>
<dbReference type="PIRSF" id="PIRSF000350">
    <property type="entry name" value="Mercury_reductase_MerA"/>
    <property type="match status" value="1"/>
</dbReference>
<dbReference type="PRINTS" id="PR00368">
    <property type="entry name" value="FADPNR"/>
</dbReference>
<dbReference type="PRINTS" id="PR00411">
    <property type="entry name" value="PNDRDTASEI"/>
</dbReference>
<dbReference type="SUPFAM" id="SSF51905">
    <property type="entry name" value="FAD/NAD(P)-binding domain"/>
    <property type="match status" value="1"/>
</dbReference>
<dbReference type="SUPFAM" id="SSF55424">
    <property type="entry name" value="FAD/NAD-linked reductases, dimerisation (C-terminal) domain"/>
    <property type="match status" value="1"/>
</dbReference>
<accession>A1AIE2</accession>
<organism>
    <name type="scientific">Escherichia coli O1:K1 / APEC</name>
    <dbReference type="NCBI Taxonomy" id="405955"/>
    <lineage>
        <taxon>Bacteria</taxon>
        <taxon>Pseudomonadati</taxon>
        <taxon>Pseudomonadota</taxon>
        <taxon>Gammaproteobacteria</taxon>
        <taxon>Enterobacterales</taxon>
        <taxon>Enterobacteriaceae</taxon>
        <taxon>Escherichia</taxon>
    </lineage>
</organism>
<reference key="1">
    <citation type="journal article" date="2007" name="J. Bacteriol.">
        <title>The genome sequence of avian pathogenic Escherichia coli strain O1:K1:H7 shares strong similarities with human extraintestinal pathogenic E. coli genomes.</title>
        <authorList>
            <person name="Johnson T.J."/>
            <person name="Kariyawasam S."/>
            <person name="Wannemuehler Y."/>
            <person name="Mangiamele P."/>
            <person name="Johnson S.J."/>
            <person name="Doetkott C."/>
            <person name="Skyberg J.A."/>
            <person name="Lynne A.M."/>
            <person name="Johnson J.R."/>
            <person name="Nolan L.K."/>
        </authorList>
    </citation>
    <scope>NUCLEOTIDE SEQUENCE [LARGE SCALE GENOMIC DNA]</scope>
</reference>
<evidence type="ECO:0000255" key="1">
    <source>
        <dbReference type="HAMAP-Rule" id="MF_00247"/>
    </source>
</evidence>
<sequence>MPHSYDYDAIVIGSGPGGEGAAMGLVKQGARVAVIERYQNVGGGCTHWGTIPSKALRHAVSRIIEFNQNPLYSDHSRLLRSSFADILNHADNVINQQTRMRQGFYERNHCEILQGNARFVDEHTLALDCPDGSVETLTAEKFVIACGSRPYHPTDVDFTHPRIYDSDSILSMHHEPRHVLIYGAGVIGCEYASIFRGMDVKVDLINTRDRLLAFLDQEMSDSLSYHFWNSGVVIRHNEEYEKIEGCDDGVIMHLKSGKKLKADCLLYANGRTGNTDSLALQNIGLETDSRGQLKVNSMYQTAQPHVYAVGDVIGYPSLASAAYDQGRIAAQALVKGEATAHLIEDIPTGIYTIPEISSVGKTEQQLTAMKVPYEVGRAQFKHLARAQIVGMNVGTLKILFHRETKEILGIHCFGERAAEIIHIGQAIMEQKGGGNTIEYFVNTTFNYPTMAEAYRVAALNGLNRLF</sequence>
<gene>
    <name evidence="1" type="primary">sthA</name>
    <name evidence="1" type="synonym">udhA</name>
    <name type="ordered locus">Ecok1_39380</name>
    <name type="ORF">APECO1_2503</name>
</gene>
<protein>
    <recommendedName>
        <fullName evidence="1">Soluble pyridine nucleotide transhydrogenase</fullName>
        <shortName evidence="1">STH</shortName>
        <ecNumber evidence="1">1.6.1.1</ecNumber>
    </recommendedName>
    <alternativeName>
        <fullName evidence="1">NAD(P)(+) transhydrogenase [B-specific]</fullName>
    </alternativeName>
</protein>